<accession>P28638</accession>
<accession>Q2M8V3</accession>
<sequence length="294" mass="33397">MRTGCEPTRFGNEAKTIIHGDALAELKKIPAESVDLIFADPPYNIGKNFDGLIEAWKEDLFIDWLFEVIAECHRVLKKQGSMYIMNSTENMPFIDLQCRKLFTIKSRIVWSYDSSGVQAKKHYGSMYEPILMMVKDAKNYTFNGDAILVEAKTGSQRALIDYRKNPPQPYNHQKVPGNVWDFPRVRYLMDEYENHPTQKPEALLKRIILASSNPGDIVLDPFAGSFTTGAVAIASGRKFIGIEINSEYIKMGLRRLDVASHYSAEELAKVKKRKTGNLSKRSRLSEVDPDLITK</sequence>
<dbReference type="EC" id="2.1.1.72" evidence="2"/>
<dbReference type="EMBL" id="U18997">
    <property type="protein sequence ID" value="AAA58066.1"/>
    <property type="status" value="ALT_INIT"/>
    <property type="molecule type" value="Genomic_DNA"/>
</dbReference>
<dbReference type="EMBL" id="U00096">
    <property type="protein sequence ID" value="AAC76294.2"/>
    <property type="molecule type" value="Genomic_DNA"/>
</dbReference>
<dbReference type="EMBL" id="AP009048">
    <property type="protein sequence ID" value="BAE77303.1"/>
    <property type="molecule type" value="Genomic_DNA"/>
</dbReference>
<dbReference type="EMBL" id="M95784">
    <property type="protein sequence ID" value="AAA23784.1"/>
    <property type="molecule type" value="Genomic_DNA"/>
</dbReference>
<dbReference type="EMBL" id="J03245">
    <property type="protein sequence ID" value="AAA83857.1"/>
    <property type="molecule type" value="Genomic_DNA"/>
</dbReference>
<dbReference type="PIR" id="H65118">
    <property type="entry name" value="H65118"/>
</dbReference>
<dbReference type="RefSeq" id="NP_417728.4">
    <property type="nucleotide sequence ID" value="NC_000913.3"/>
</dbReference>
<dbReference type="RefSeq" id="WP_001258895.1">
    <property type="nucleotide sequence ID" value="NZ_SSZK01000034.1"/>
</dbReference>
<dbReference type="SMR" id="P28638"/>
<dbReference type="BioGRID" id="4262450">
    <property type="interactions" value="216"/>
</dbReference>
<dbReference type="BioGRID" id="852008">
    <property type="interactions" value="32"/>
</dbReference>
<dbReference type="DIP" id="DIP-12296N"/>
<dbReference type="FunCoup" id="P28638">
    <property type="interactions" value="311"/>
</dbReference>
<dbReference type="IntAct" id="P28638">
    <property type="interactions" value="34"/>
</dbReference>
<dbReference type="STRING" id="511145.b3262"/>
<dbReference type="REBASE" id="13375">
    <property type="entry name" value="M.EcoW3110ORF3249P"/>
</dbReference>
<dbReference type="REBASE" id="191860">
    <property type="entry name" value="M.Apa1447ORF405P"/>
</dbReference>
<dbReference type="REBASE" id="191899">
    <property type="entry name" value="M.Apa1342ORF402P"/>
</dbReference>
<dbReference type="REBASE" id="191903">
    <property type="entry name" value="M.Apa1468ORF401P"/>
</dbReference>
<dbReference type="REBASE" id="232308">
    <property type="entry name" value="M.Sen4024ORF451P"/>
</dbReference>
<dbReference type="REBASE" id="232685">
    <property type="entry name" value="M.Sen4839ORF451P"/>
</dbReference>
<dbReference type="REBASE" id="3885">
    <property type="entry name" value="M.EcoKII"/>
</dbReference>
<dbReference type="REBASE" id="400747">
    <property type="entry name" value="M.Eco6192ORF11P"/>
</dbReference>
<dbReference type="REBASE" id="441486">
    <property type="entry name" value="M.EcoBL21FORF3183P"/>
</dbReference>
<dbReference type="REBASE" id="701539">
    <property type="entry name" value="M.EcoKORFAP"/>
</dbReference>
<dbReference type="REBASE" id="757850">
    <property type="entry name" value="M.Eco320ORF8P"/>
</dbReference>
<dbReference type="PaxDb" id="511145-b3262"/>
<dbReference type="EnsemblBacteria" id="AAC76294">
    <property type="protein sequence ID" value="AAC76294"/>
    <property type="gene ID" value="b3262"/>
</dbReference>
<dbReference type="GeneID" id="947695"/>
<dbReference type="KEGG" id="ecj:JW5543"/>
<dbReference type="KEGG" id="eco:b3262"/>
<dbReference type="KEGG" id="ecoc:C3026_17745"/>
<dbReference type="PATRIC" id="fig|511145.12.peg.3361"/>
<dbReference type="EchoBASE" id="EB1461"/>
<dbReference type="eggNOG" id="COG2189">
    <property type="taxonomic scope" value="Bacteria"/>
</dbReference>
<dbReference type="HOGENOM" id="CLU_024927_5_2_6"/>
<dbReference type="InParanoid" id="P28638"/>
<dbReference type="OMA" id="SIHKMSA"/>
<dbReference type="OrthoDB" id="9816043at2"/>
<dbReference type="PhylomeDB" id="P28638"/>
<dbReference type="BioCyc" id="EcoCyc:EG11498-MONOMER"/>
<dbReference type="BioCyc" id="MetaCyc:EG11498-MONOMER"/>
<dbReference type="PRO" id="PR:P28638"/>
<dbReference type="Proteomes" id="UP000000625">
    <property type="component" value="Chromosome"/>
</dbReference>
<dbReference type="GO" id="GO:0005737">
    <property type="term" value="C:cytoplasm"/>
    <property type="evidence" value="ECO:0000318"/>
    <property type="project" value="GO_Central"/>
</dbReference>
<dbReference type="GO" id="GO:0003677">
    <property type="term" value="F:DNA binding"/>
    <property type="evidence" value="ECO:0007669"/>
    <property type="project" value="UniProtKB-KW"/>
</dbReference>
<dbReference type="GO" id="GO:0008170">
    <property type="term" value="F:N-methyltransferase activity"/>
    <property type="evidence" value="ECO:0007669"/>
    <property type="project" value="InterPro"/>
</dbReference>
<dbReference type="GO" id="GO:0009007">
    <property type="term" value="F:site-specific DNA-methyltransferase (adenine-specific) activity"/>
    <property type="evidence" value="ECO:0000314"/>
    <property type="project" value="EcoCyc"/>
</dbReference>
<dbReference type="GO" id="GO:0032259">
    <property type="term" value="P:methylation"/>
    <property type="evidence" value="ECO:0007669"/>
    <property type="project" value="UniProtKB-KW"/>
</dbReference>
<dbReference type="CDD" id="cd02440">
    <property type="entry name" value="AdoMet_MTases"/>
    <property type="match status" value="1"/>
</dbReference>
<dbReference type="FunFam" id="3.40.50.150:FF:000100">
    <property type="entry name" value="Methyltransferase"/>
    <property type="match status" value="1"/>
</dbReference>
<dbReference type="Gene3D" id="3.40.50.150">
    <property type="entry name" value="Vaccinia Virus protein VP39"/>
    <property type="match status" value="1"/>
</dbReference>
<dbReference type="InterPro" id="IPR002941">
    <property type="entry name" value="DNA_methylase_N4/N6"/>
</dbReference>
<dbReference type="InterPro" id="IPR002052">
    <property type="entry name" value="DNA_methylase_N6_adenine_CS"/>
</dbReference>
<dbReference type="InterPro" id="IPR001091">
    <property type="entry name" value="RM_Methyltransferase"/>
</dbReference>
<dbReference type="InterPro" id="IPR029063">
    <property type="entry name" value="SAM-dependent_MTases_sf"/>
</dbReference>
<dbReference type="NCBIfam" id="NF008572">
    <property type="entry name" value="PRK11524.1"/>
    <property type="match status" value="1"/>
</dbReference>
<dbReference type="PANTHER" id="PTHR13370:SF33">
    <property type="entry name" value="DNA ADENINE METHYLTRANSFERASE YHDJ"/>
    <property type="match status" value="1"/>
</dbReference>
<dbReference type="PANTHER" id="PTHR13370">
    <property type="entry name" value="RNA METHYLASE-RELATED"/>
    <property type="match status" value="1"/>
</dbReference>
<dbReference type="Pfam" id="PF01555">
    <property type="entry name" value="N6_N4_Mtase"/>
    <property type="match status" value="1"/>
</dbReference>
<dbReference type="PRINTS" id="PR00508">
    <property type="entry name" value="S21N4MTFRASE"/>
</dbReference>
<dbReference type="SUPFAM" id="SSF53335">
    <property type="entry name" value="S-adenosyl-L-methionine-dependent methyltransferases"/>
    <property type="match status" value="1"/>
</dbReference>
<dbReference type="PROSITE" id="PS00092">
    <property type="entry name" value="N6_MTASE"/>
    <property type="match status" value="1"/>
</dbReference>
<gene>
    <name type="primary">yhdJ</name>
    <name type="ordered locus">b3262</name>
    <name type="ordered locus">JW5543</name>
</gene>
<evidence type="ECO:0000256" key="1">
    <source>
        <dbReference type="SAM" id="MobiDB-lite"/>
    </source>
</evidence>
<evidence type="ECO:0000269" key="2">
    <source>
    </source>
</evidence>
<evidence type="ECO:0000303" key="3">
    <source>
    </source>
</evidence>
<evidence type="ECO:0000305" key="4"/>
<name>YHDJ_ECOLI</name>
<keyword id="KW-0238">DNA-binding</keyword>
<keyword id="KW-0489">Methyltransferase</keyword>
<keyword id="KW-1185">Reference proteome</keyword>
<keyword id="KW-0949">S-adenosyl-L-methionine</keyword>
<keyword id="KW-0808">Transferase</keyword>
<feature type="chain" id="PRO_0000088000" description="DNA adenine methyltransferase YhdJ">
    <location>
        <begin position="1"/>
        <end position="294"/>
    </location>
</feature>
<feature type="region of interest" description="Disordered" evidence="1">
    <location>
        <begin position="275"/>
        <end position="294"/>
    </location>
</feature>
<feature type="compositionally biased region" description="Basic and acidic residues" evidence="1">
    <location>
        <begin position="283"/>
        <end position="294"/>
    </location>
</feature>
<feature type="sequence conflict" description="In Ref. 3; AAA23784." evidence="4" ref="3">
    <original>K</original>
    <variation>N</variation>
    <location>
        <position position="28"/>
    </location>
</feature>
<proteinExistence type="evidence at protein level"/>
<organism>
    <name type="scientific">Escherichia coli (strain K12)</name>
    <dbReference type="NCBI Taxonomy" id="83333"/>
    <lineage>
        <taxon>Bacteria</taxon>
        <taxon>Pseudomonadati</taxon>
        <taxon>Pseudomonadota</taxon>
        <taxon>Gammaproteobacteria</taxon>
        <taxon>Enterobacterales</taxon>
        <taxon>Enterobacteriaceae</taxon>
        <taxon>Escherichia</taxon>
    </lineage>
</organism>
<protein>
    <recommendedName>
        <fullName>DNA adenine methyltransferase YhdJ</fullName>
        <ecNumber evidence="2">2.1.1.72</ecNumber>
    </recommendedName>
    <alternativeName>
        <fullName evidence="3">Type II methyltransferase M.EcoKII</fullName>
        <shortName evidence="3">M.EcoKII</shortName>
    </alternativeName>
</protein>
<comment type="function">
    <text evidence="2 3">A beta subtype methylase, recognizes the double-stranded sequence 5'-ATGCAT-3' and methylates A-5.</text>
</comment>
<comment type="catalytic activity">
    <reaction evidence="2">
        <text>a 2'-deoxyadenosine in DNA + S-adenosyl-L-methionine = an N(6)-methyl-2'-deoxyadenosine in DNA + S-adenosyl-L-homocysteine + H(+)</text>
        <dbReference type="Rhea" id="RHEA:15197"/>
        <dbReference type="Rhea" id="RHEA-COMP:12418"/>
        <dbReference type="Rhea" id="RHEA-COMP:12419"/>
        <dbReference type="ChEBI" id="CHEBI:15378"/>
        <dbReference type="ChEBI" id="CHEBI:57856"/>
        <dbReference type="ChEBI" id="CHEBI:59789"/>
        <dbReference type="ChEBI" id="CHEBI:90615"/>
        <dbReference type="ChEBI" id="CHEBI:90616"/>
        <dbReference type="EC" id="2.1.1.72"/>
    </reaction>
</comment>
<comment type="disruption phenotype">
    <text evidence="2">Mutants are viable and show no significant growth deficiency and no alteration of cell morphology.</text>
</comment>
<comment type="similarity">
    <text evidence="4">Belongs to the N(4)/N(6)-methyltransferase family.</text>
</comment>
<comment type="sequence caution" evidence="4">
    <conflict type="erroneous initiation">
        <sequence resource="EMBL-CDS" id="AAA58066"/>
    </conflict>
    <text>Extended N-terminus.</text>
</comment>
<reference key="1">
    <citation type="journal article" date="1997" name="Science">
        <title>The complete genome sequence of Escherichia coli K-12.</title>
        <authorList>
            <person name="Blattner F.R."/>
            <person name="Plunkett G. III"/>
            <person name="Bloch C.A."/>
            <person name="Perna N.T."/>
            <person name="Burland V."/>
            <person name="Riley M."/>
            <person name="Collado-Vides J."/>
            <person name="Glasner J.D."/>
            <person name="Rode C.K."/>
            <person name="Mayhew G.F."/>
            <person name="Gregor J."/>
            <person name="Davis N.W."/>
            <person name="Kirkpatrick H.A."/>
            <person name="Goeden M.A."/>
            <person name="Rose D.J."/>
            <person name="Mau B."/>
            <person name="Shao Y."/>
        </authorList>
    </citation>
    <scope>NUCLEOTIDE SEQUENCE [LARGE SCALE GENOMIC DNA]</scope>
    <source>
        <strain>K12 / MG1655 / ATCC 47076</strain>
    </source>
</reference>
<reference key="2">
    <citation type="journal article" date="2006" name="Mol. Syst. Biol.">
        <title>Highly accurate genome sequences of Escherichia coli K-12 strains MG1655 and W3110.</title>
        <authorList>
            <person name="Hayashi K."/>
            <person name="Morooka N."/>
            <person name="Yamamoto Y."/>
            <person name="Fujita K."/>
            <person name="Isono K."/>
            <person name="Choi S."/>
            <person name="Ohtsubo E."/>
            <person name="Baba T."/>
            <person name="Wanner B.L."/>
            <person name="Mori H."/>
            <person name="Horiuchi T."/>
        </authorList>
    </citation>
    <scope>NUCLEOTIDE SEQUENCE [LARGE SCALE GENOMIC DNA]</scope>
    <source>
        <strain>K12 / W3110 / ATCC 27325 / DSM 5911</strain>
    </source>
</reference>
<reference key="3">
    <citation type="journal article" date="1992" name="J. Bacteriol.">
        <title>Dramatic changes in Fis levels upon nutrient upshift in Escherichia coli.</title>
        <authorList>
            <person name="Ball C.A."/>
            <person name="Osuna R."/>
            <person name="Ferguson K.C."/>
            <person name="Johnson R.C."/>
        </authorList>
    </citation>
    <scope>NUCLEOTIDE SEQUENCE [GENOMIC DNA] OF 1-100</scope>
</reference>
<reference key="4">
    <citation type="journal article" date="1988" name="Proc. Natl. Acad. Sci. U.S.A.">
        <title>Isolation of the gene encoding the Hin recombinational enhancer binding protein.</title>
        <authorList>
            <person name="Johnson R.C."/>
            <person name="Ball C.A."/>
            <person name="Pfeffer D."/>
            <person name="Simon M.I."/>
        </authorList>
    </citation>
    <scope>NUCLEOTIDE SEQUENCE [GENOMIC DNA] OF 1-11</scope>
    <source>
        <strain>K12</strain>
    </source>
</reference>
<reference key="5">
    <citation type="journal article" date="2003" name="Nucleic Acids Res.">
        <title>A nomenclature for restriction enzymes, DNA methyltransferases, homing endonucleases and their genes.</title>
        <authorList>
            <person name="Roberts R.J."/>
            <person name="Belfort M."/>
            <person name="Bestor T."/>
            <person name="Bhagwat A.S."/>
            <person name="Bickle T.A."/>
            <person name="Bitinaite J."/>
            <person name="Blumenthal R.M."/>
            <person name="Degtyarev S.K."/>
            <person name="Dryden D.T."/>
            <person name="Dybvig K."/>
            <person name="Firman K."/>
            <person name="Gromova E.S."/>
            <person name="Gumport R.I."/>
            <person name="Halford S.E."/>
            <person name="Hattman S."/>
            <person name="Heitman J."/>
            <person name="Hornby D.P."/>
            <person name="Janulaitis A."/>
            <person name="Jeltsch A."/>
            <person name="Josephsen J."/>
            <person name="Kiss A."/>
            <person name="Klaenhammer T.R."/>
            <person name="Kobayashi I."/>
            <person name="Kong H."/>
            <person name="Krueger D.H."/>
            <person name="Lacks S."/>
            <person name="Marinus M.G."/>
            <person name="Miyahara M."/>
            <person name="Morgan R.D."/>
            <person name="Murray N.E."/>
            <person name="Nagaraja V."/>
            <person name="Piekarowicz A."/>
            <person name="Pingoud A."/>
            <person name="Raleigh E."/>
            <person name="Rao D.N."/>
            <person name="Reich N."/>
            <person name="Repin V.E."/>
            <person name="Selker E.U."/>
            <person name="Shaw P.C."/>
            <person name="Stein D.C."/>
            <person name="Stoddard B.L."/>
            <person name="Szybalski W."/>
            <person name="Trautner T.A."/>
            <person name="Van Etten J.L."/>
            <person name="Vitor J.M."/>
            <person name="Wilson G.G."/>
            <person name="Xu S.Y."/>
        </authorList>
    </citation>
    <scope>NOMENCLATURE</scope>
    <scope>SUBTYPE</scope>
</reference>
<reference key="6">
    <citation type="journal article" date="2007" name="J. Bacteriol.">
        <title>YhdJ, a nonessential CcrM-like DNA methyltransferase of Escherichia coli and Salmonella enterica.</title>
        <authorList>
            <person name="Broadbent S.E."/>
            <person name="Balbontin R."/>
            <person name="Casadesus J."/>
            <person name="Marinus M.G."/>
            <person name="van der Woude M."/>
        </authorList>
    </citation>
    <scope>FUNCTION</scope>
    <scope>CATALYTIC ACTIVITY</scope>
    <scope>DISRUPTION PHENOTYPE</scope>
</reference>